<protein>
    <recommendedName>
        <fullName>Probable cysteine protease ATG4</fullName>
        <ecNumber>3.4.22.-</ecNumber>
    </recommendedName>
    <alternativeName>
        <fullName>Autophagy-related protein 4</fullName>
    </alternativeName>
</protein>
<dbReference type="EC" id="3.4.22.-"/>
<dbReference type="EMBL" id="CH408029">
    <property type="protein sequence ID" value="EAQ92229.1"/>
    <property type="status" value="ALT_SEQ"/>
    <property type="molecule type" value="Genomic_DNA"/>
</dbReference>
<dbReference type="RefSeq" id="XP_001219685.1">
    <property type="nucleotide sequence ID" value="XM_001219684.1"/>
</dbReference>
<dbReference type="SMR" id="Q2HH40"/>
<dbReference type="FunCoup" id="Q2HH40">
    <property type="interactions" value="277"/>
</dbReference>
<dbReference type="STRING" id="306901.Q2HH40"/>
<dbReference type="MEROPS" id="C54.001"/>
<dbReference type="GeneID" id="4387937"/>
<dbReference type="VEuPathDB" id="FungiDB:CHGG_00464"/>
<dbReference type="eggNOG" id="KOG2674">
    <property type="taxonomic scope" value="Eukaryota"/>
</dbReference>
<dbReference type="HOGENOM" id="CLU_021259_5_1_1"/>
<dbReference type="InParanoid" id="Q2HH40"/>
<dbReference type="OrthoDB" id="2960936at2759"/>
<dbReference type="Proteomes" id="UP000001056">
    <property type="component" value="Unassembled WGS sequence"/>
</dbReference>
<dbReference type="GO" id="GO:0005634">
    <property type="term" value="C:nucleus"/>
    <property type="evidence" value="ECO:0007669"/>
    <property type="project" value="UniProtKB-SubCell"/>
</dbReference>
<dbReference type="GO" id="GO:0000407">
    <property type="term" value="C:phagophore assembly site"/>
    <property type="evidence" value="ECO:0007669"/>
    <property type="project" value="UniProtKB-SubCell"/>
</dbReference>
<dbReference type="GO" id="GO:0004197">
    <property type="term" value="F:cysteine-type endopeptidase activity"/>
    <property type="evidence" value="ECO:0007669"/>
    <property type="project" value="TreeGrafter"/>
</dbReference>
<dbReference type="GO" id="GO:0019786">
    <property type="term" value="F:protein-phosphatidylethanolamide deconjugating activity"/>
    <property type="evidence" value="ECO:0007669"/>
    <property type="project" value="InterPro"/>
</dbReference>
<dbReference type="GO" id="GO:0035973">
    <property type="term" value="P:aggrephagy"/>
    <property type="evidence" value="ECO:0007669"/>
    <property type="project" value="TreeGrafter"/>
</dbReference>
<dbReference type="GO" id="GO:0000045">
    <property type="term" value="P:autophagosome assembly"/>
    <property type="evidence" value="ECO:0007669"/>
    <property type="project" value="TreeGrafter"/>
</dbReference>
<dbReference type="GO" id="GO:0000423">
    <property type="term" value="P:mitophagy"/>
    <property type="evidence" value="ECO:0007669"/>
    <property type="project" value="TreeGrafter"/>
</dbReference>
<dbReference type="GO" id="GO:0034727">
    <property type="term" value="P:piecemeal microautophagy of the nucleus"/>
    <property type="evidence" value="ECO:0007669"/>
    <property type="project" value="TreeGrafter"/>
</dbReference>
<dbReference type="GO" id="GO:0016485">
    <property type="term" value="P:protein processing"/>
    <property type="evidence" value="ECO:0007669"/>
    <property type="project" value="TreeGrafter"/>
</dbReference>
<dbReference type="GO" id="GO:0015031">
    <property type="term" value="P:protein transport"/>
    <property type="evidence" value="ECO:0007669"/>
    <property type="project" value="UniProtKB-KW"/>
</dbReference>
<dbReference type="InterPro" id="IPR038765">
    <property type="entry name" value="Papain-like_cys_pep_sf"/>
</dbReference>
<dbReference type="InterPro" id="IPR005078">
    <property type="entry name" value="Peptidase_C54"/>
</dbReference>
<dbReference type="InterPro" id="IPR046792">
    <property type="entry name" value="Peptidase_C54_cat"/>
</dbReference>
<dbReference type="PANTHER" id="PTHR22624:SF49">
    <property type="entry name" value="CYSTEINE PROTEASE"/>
    <property type="match status" value="1"/>
</dbReference>
<dbReference type="PANTHER" id="PTHR22624">
    <property type="entry name" value="CYSTEINE PROTEASE ATG4"/>
    <property type="match status" value="1"/>
</dbReference>
<dbReference type="Pfam" id="PF03416">
    <property type="entry name" value="Peptidase_C54"/>
    <property type="match status" value="1"/>
</dbReference>
<dbReference type="SUPFAM" id="SSF54001">
    <property type="entry name" value="Cysteine proteinases"/>
    <property type="match status" value="1"/>
</dbReference>
<proteinExistence type="inferred from homology"/>
<feature type="chain" id="PRO_0000317836" description="Probable cysteine protease ATG4">
    <location>
        <begin position="1"/>
        <end position="448"/>
    </location>
</feature>
<feature type="region of interest" description="Disordered" evidence="3">
    <location>
        <begin position="69"/>
        <end position="90"/>
    </location>
</feature>
<feature type="compositionally biased region" description="Low complexity" evidence="3">
    <location>
        <begin position="69"/>
        <end position="78"/>
    </location>
</feature>
<feature type="active site" description="Nucleophile" evidence="2">
    <location>
        <position position="168"/>
    </location>
</feature>
<feature type="active site" evidence="2">
    <location>
        <position position="341"/>
    </location>
</feature>
<feature type="active site" evidence="2">
    <location>
        <position position="343"/>
    </location>
</feature>
<comment type="function">
    <text evidence="1">Cysteine protease that plays a key role in cytoplasm to vacuole transport (Cvt) and autophagy by mediating both proteolytic activation and delipidation of ATG8. Required for selective autophagic degradation of the nucleus (nucleophagy) as well as for mitophagy which contributes to regulate mitochondrial quantity and quality by eliminating the mitochondria to a basal level to fulfill cellular energy requirements and preventing excess ROS production. The protease activity is required for proteolytic activation of ATG8: cleaves the C-terminal amino acid of ATG8 to reveal a C-terminal glycine. ATG8 ubiquitin-like activity requires the exposure of the glycine at the C-terminus for its conjugation to phosphatidylethanolamine (PE) and its insertion to membranes, which is necessary for autophagy. The ATG8-PE conjugate mediates tethering between adjacent membranes and stimulates membrane hemifusion, leading to expansion of the autophagosomal membrane during autophagy. In addition to the protease activity, also catalyzes deconjugation of PE-conjugated forms of ATG8 during macroautophagy: ATG8 delipidation is required to release the protein from membranes, which facilitates multiple events during macroautophagy, and especially for efficient autophagosome biogenesis, the assembly of ATG9-containing tubulovesicular clusters into phagophores/autophagosomes, and for the disassembly of PAS-associated ATG components. ATG8 delipidation by ATG4 also recycles ATG8-PE generated on inappropriate membranes to maintain a reservoir of unlipidated ATG8 that is required for autophagosome formation at the PAS.</text>
</comment>
<comment type="catalytic activity">
    <reaction evidence="1">
        <text>[protein]-C-terminal L-amino acid-glycyl-phosphatidylethanolamide + H2O = [protein]-C-terminal L-amino acid-glycine + a 1,2-diacyl-sn-glycero-3-phosphoethanolamine</text>
        <dbReference type="Rhea" id="RHEA:67548"/>
        <dbReference type="Rhea" id="RHEA-COMP:17323"/>
        <dbReference type="Rhea" id="RHEA-COMP:17324"/>
        <dbReference type="ChEBI" id="CHEBI:15377"/>
        <dbReference type="ChEBI" id="CHEBI:64612"/>
        <dbReference type="ChEBI" id="CHEBI:172940"/>
        <dbReference type="ChEBI" id="CHEBI:172941"/>
    </reaction>
    <physiologicalReaction direction="left-to-right" evidence="1">
        <dbReference type="Rhea" id="RHEA:67549"/>
    </physiologicalReaction>
</comment>
<comment type="subcellular location">
    <subcellularLocation>
        <location evidence="1">Cytoplasm</location>
    </subcellularLocation>
    <subcellularLocation>
        <location evidence="1">Nucleus</location>
    </subcellularLocation>
    <subcellularLocation>
        <location evidence="1">Preautophagosomal structure</location>
    </subcellularLocation>
</comment>
<comment type="similarity">
    <text evidence="4">Belongs to the peptidase C54 family.</text>
</comment>
<comment type="sequence caution" evidence="4">
    <conflict type="erroneous gene model prediction">
        <sequence resource="EMBL-CDS" id="EAQ92229"/>
    </conflict>
</comment>
<reference key="1">
    <citation type="journal article" date="2015" name="Genome Announc.">
        <title>Draft genome sequence of the cellulolytic fungus Chaetomium globosum.</title>
        <authorList>
            <person name="Cuomo C.A."/>
            <person name="Untereiner W.A."/>
            <person name="Ma L.-J."/>
            <person name="Grabherr M."/>
            <person name="Birren B.W."/>
        </authorList>
    </citation>
    <scope>NUCLEOTIDE SEQUENCE [LARGE SCALE GENOMIC DNA]</scope>
    <source>
        <strain>ATCC 6205 / CBS 148.51 / DSM 1962 / NBRC 6347 / NRRL 1970</strain>
    </source>
</reference>
<name>ATG4_CHAGB</name>
<keyword id="KW-0072">Autophagy</keyword>
<keyword id="KW-0963">Cytoplasm</keyword>
<keyword id="KW-0378">Hydrolase</keyword>
<keyword id="KW-0539">Nucleus</keyword>
<keyword id="KW-0645">Protease</keyword>
<keyword id="KW-0653">Protein transport</keyword>
<keyword id="KW-1185">Reference proteome</keyword>
<keyword id="KW-0788">Thiol protease</keyword>
<keyword id="KW-0813">Transport</keyword>
<sequence length="448" mass="49557">MEVALAVGAEASRVSRRILQKIWDPEPINDRDSNEPVWCLGRSYKLAPETPSPVTTATSPVDGAIDAAPAPIATPGTTNRQAIDTPPDSLASSFDSSLAYDNRNQDSGWPPAFLDDFGSRIWMTYRTGFEPIPRSTDPKAASALSFTMRLKTSFGDQTGFSSDTGWGCMIRSGQSLLANALLISQLGRDWRRTTDPGAERNIVALFADDARAPYSLQNFVKHGAIACGKHPGEWFGPSATARCIQALADQHESSLRIYSTGDLPDVYEDSFLATARPDGETFHPTLILVCTRLGIDKINPVYEEALISTLQMEQSIGIAGGRPSSSHYFVGVQRQWLFYLDPHHPRPALQYRENPLNYTLEELDSCHTRRLRYLHVEDMDPSMLIGFLIQDEDDWDMWKSAVKHVQGKSIINVSRHDPARGMGGARAEAIDEVETLSDDDDVDTVLEQ</sequence>
<accession>Q2HH40</accession>
<gene>
    <name type="primary">ATG4</name>
    <name type="ORF">CHGG_00464</name>
</gene>
<evidence type="ECO:0000250" key="1">
    <source>
        <dbReference type="UniProtKB" id="P53867"/>
    </source>
</evidence>
<evidence type="ECO:0000250" key="2">
    <source>
        <dbReference type="UniProtKB" id="Q9Y4P1"/>
    </source>
</evidence>
<evidence type="ECO:0000256" key="3">
    <source>
        <dbReference type="SAM" id="MobiDB-lite"/>
    </source>
</evidence>
<evidence type="ECO:0000305" key="4"/>
<organism>
    <name type="scientific">Chaetomium globosum (strain ATCC 6205 / CBS 148.51 / DSM 1962 / NBRC 6347 / NRRL 1970)</name>
    <name type="common">Soil fungus</name>
    <dbReference type="NCBI Taxonomy" id="306901"/>
    <lineage>
        <taxon>Eukaryota</taxon>
        <taxon>Fungi</taxon>
        <taxon>Dikarya</taxon>
        <taxon>Ascomycota</taxon>
        <taxon>Pezizomycotina</taxon>
        <taxon>Sordariomycetes</taxon>
        <taxon>Sordariomycetidae</taxon>
        <taxon>Sordariales</taxon>
        <taxon>Chaetomiaceae</taxon>
        <taxon>Chaetomium</taxon>
    </lineage>
</organism>